<sequence>MRILKIQTLRGPNYWSIRRHKLIVMRLDLETLAETPSNEIPGFYEGLVEALPSLEGHYCSPGCHGGFLMRVREGTMMGHIVEHVALELQELAGMHVGFGRTRETATPGIYQVVIEYLNEEAGRYAGRAAVRLCQSIVDRGRYPKAELEQDIQDLKDLWRDASLGPSTEAIVKEAEKRGIPWMQLSARFLIQLGYGVNHKRMQATMTDKTGILGVELACDKEATKRILAASGVPVPRGTVINFLDDLEEAIEYVGGYPIVIKPLDGNHGRGITIDIRSWEEAEAAYEAARQVSRSIIVERYYVGRDHRVLVVDGKVVAVAERVPAHVIGNGRSTVAELIEEINQDPNRGDGHDKVLTKIELDRTSYQLLERAGYTLNSVPPKGTICYLRATANLSTGGTAVDRTDEIHPENVWLAQRVVKIIGLDIAGLDIVTTDISRPLRELDGVIVEVNAAPGFRMHVAPSQGIPRNVAGAVMDMLFPNEQSGRIPILSVTGTNGKTTTTRLLAHIYKQTGKVVGYTTTDGTYIGDYLVESGDNTGPQSAHVILQDPTVEVAVLETARGGILRSGLGFESANVGVVLNVAADHLGIGDIDTIDQLANLKSVVAESVYPDGYAVLNADDRRVAAMAEKTKANIAYFTMNSESELVRKHIQKGGVAAVYENGYLSIVKGDWTHRIERAEQIPLTMGGRAPFMIANALAASLAAFVQNVSIEQIRAGLRTFRASVSQTPGRMNLFNLGNYHALVDYAHNPASYEAVGAFVRNWTSGQRIGVVGGPGDRRDEDFVTLGKLAAEIFDYIIVKEDDDTRGRPRGSASELITKGITQVKPDARYESILDETQAINKGLDMAPANGLVVILPESVSRAIKLIKLRGLVKEEIQQQNSSTTVIDNQNGVASSSVINTLL</sequence>
<reference key="1">
    <citation type="journal article" date="2001" name="DNA Res.">
        <title>Complete genomic sequence of the filamentous nitrogen-fixing cyanobacterium Anabaena sp. strain PCC 7120.</title>
        <authorList>
            <person name="Kaneko T."/>
            <person name="Nakamura Y."/>
            <person name="Wolk C.P."/>
            <person name="Kuritz T."/>
            <person name="Sasamoto S."/>
            <person name="Watanabe A."/>
            <person name="Iriguchi M."/>
            <person name="Ishikawa A."/>
            <person name="Kawashima K."/>
            <person name="Kimura T."/>
            <person name="Kishida Y."/>
            <person name="Kohara M."/>
            <person name="Matsumoto M."/>
            <person name="Matsuno A."/>
            <person name="Muraki A."/>
            <person name="Nakazaki N."/>
            <person name="Shimpo S."/>
            <person name="Sugimoto M."/>
            <person name="Takazawa M."/>
            <person name="Yamada M."/>
            <person name="Yasuda M."/>
            <person name="Tabata S."/>
        </authorList>
    </citation>
    <scope>NUCLEOTIDE SEQUENCE [LARGE SCALE GENOMIC DNA]</scope>
    <source>
        <strain>PCC 7120 / SAG 25.82 / UTEX 2576</strain>
    </source>
</reference>
<dbReference type="EC" id="6.3.2.29"/>
<dbReference type="EC" id="6.3.2.30"/>
<dbReference type="EMBL" id="BA000019">
    <property type="protein sequence ID" value="BAB75578.1"/>
    <property type="molecule type" value="Genomic_DNA"/>
</dbReference>
<dbReference type="PIR" id="AH2290">
    <property type="entry name" value="AH2290"/>
</dbReference>
<dbReference type="RefSeq" id="WP_010998020.1">
    <property type="nucleotide sequence ID" value="NZ_RSCN01000011.1"/>
</dbReference>
<dbReference type="SMR" id="P58572"/>
<dbReference type="STRING" id="103690.gene:10495921"/>
<dbReference type="KEGG" id="ana:all3879"/>
<dbReference type="eggNOG" id="COG0189">
    <property type="taxonomic scope" value="Bacteria"/>
</dbReference>
<dbReference type="eggNOG" id="COG0769">
    <property type="taxonomic scope" value="Bacteria"/>
</dbReference>
<dbReference type="OrthoDB" id="9803907at2"/>
<dbReference type="BRENDA" id="6.3.2.29">
    <property type="organism ID" value="319"/>
</dbReference>
<dbReference type="BRENDA" id="6.3.2.30">
    <property type="organism ID" value="319"/>
</dbReference>
<dbReference type="Proteomes" id="UP000002483">
    <property type="component" value="Chromosome"/>
</dbReference>
<dbReference type="GO" id="GO:0005524">
    <property type="term" value="F:ATP binding"/>
    <property type="evidence" value="ECO:0007669"/>
    <property type="project" value="UniProtKB-KW"/>
</dbReference>
<dbReference type="GO" id="GO:0071161">
    <property type="term" value="F:cyanophycin synthetase activity (L-arginine-adding)"/>
    <property type="evidence" value="ECO:0007669"/>
    <property type="project" value="UniProtKB-EC"/>
</dbReference>
<dbReference type="GO" id="GO:0071160">
    <property type="term" value="F:cyanophycin synthetase activity (L-aspartate-adding)"/>
    <property type="evidence" value="ECO:0007669"/>
    <property type="project" value="UniProtKB-EC"/>
</dbReference>
<dbReference type="GO" id="GO:0046872">
    <property type="term" value="F:metal ion binding"/>
    <property type="evidence" value="ECO:0007669"/>
    <property type="project" value="InterPro"/>
</dbReference>
<dbReference type="GO" id="GO:0009058">
    <property type="term" value="P:biosynthetic process"/>
    <property type="evidence" value="ECO:0007669"/>
    <property type="project" value="InterPro"/>
</dbReference>
<dbReference type="Gene3D" id="3.30.470.20">
    <property type="entry name" value="ATP-grasp fold, B domain"/>
    <property type="match status" value="2"/>
</dbReference>
<dbReference type="Gene3D" id="3.90.190.20">
    <property type="entry name" value="Mur ligase, C-terminal domain"/>
    <property type="match status" value="1"/>
</dbReference>
<dbReference type="Gene3D" id="3.40.1190.10">
    <property type="entry name" value="Mur-like, catalytic domain"/>
    <property type="match status" value="1"/>
</dbReference>
<dbReference type="InterPro" id="IPR011761">
    <property type="entry name" value="ATP-grasp"/>
</dbReference>
<dbReference type="InterPro" id="IPR013651">
    <property type="entry name" value="ATP-grasp_RimK-type"/>
</dbReference>
<dbReference type="InterPro" id="IPR011810">
    <property type="entry name" value="Cya_phycin_syn"/>
</dbReference>
<dbReference type="InterPro" id="IPR044019">
    <property type="entry name" value="Cyanophycin_syn_N"/>
</dbReference>
<dbReference type="InterPro" id="IPR036565">
    <property type="entry name" value="Mur-like_cat_sf"/>
</dbReference>
<dbReference type="InterPro" id="IPR004101">
    <property type="entry name" value="Mur_ligase_C"/>
</dbReference>
<dbReference type="InterPro" id="IPR036615">
    <property type="entry name" value="Mur_ligase_C_dom_sf"/>
</dbReference>
<dbReference type="InterPro" id="IPR013221">
    <property type="entry name" value="Mur_ligase_cen"/>
</dbReference>
<dbReference type="NCBIfam" id="TIGR02068">
    <property type="entry name" value="cya_phycin_syn"/>
    <property type="match status" value="1"/>
</dbReference>
<dbReference type="NCBIfam" id="NF010623">
    <property type="entry name" value="PRK14016.1"/>
    <property type="match status" value="1"/>
</dbReference>
<dbReference type="PANTHER" id="PTHR23135:SF18">
    <property type="entry name" value="CYANOPHYCIN SYNTHETASE"/>
    <property type="match status" value="1"/>
</dbReference>
<dbReference type="PANTHER" id="PTHR23135">
    <property type="entry name" value="MUR LIGASE FAMILY MEMBER"/>
    <property type="match status" value="1"/>
</dbReference>
<dbReference type="Pfam" id="PF18921">
    <property type="entry name" value="Cyanophycin_syn"/>
    <property type="match status" value="1"/>
</dbReference>
<dbReference type="Pfam" id="PF02875">
    <property type="entry name" value="Mur_ligase_C"/>
    <property type="match status" value="1"/>
</dbReference>
<dbReference type="Pfam" id="PF08245">
    <property type="entry name" value="Mur_ligase_M"/>
    <property type="match status" value="1"/>
</dbReference>
<dbReference type="Pfam" id="PF08443">
    <property type="entry name" value="RimK"/>
    <property type="match status" value="1"/>
</dbReference>
<dbReference type="SUPFAM" id="SSF56059">
    <property type="entry name" value="Glutathione synthetase ATP-binding domain-like"/>
    <property type="match status" value="1"/>
</dbReference>
<dbReference type="SUPFAM" id="SSF53623">
    <property type="entry name" value="MurD-like peptide ligases, catalytic domain"/>
    <property type="match status" value="1"/>
</dbReference>
<dbReference type="SUPFAM" id="SSF53244">
    <property type="entry name" value="MurD-like peptide ligases, peptide-binding domain"/>
    <property type="match status" value="1"/>
</dbReference>
<dbReference type="PROSITE" id="PS50975">
    <property type="entry name" value="ATP_GRASP"/>
    <property type="match status" value="1"/>
</dbReference>
<gene>
    <name type="primary">cphA</name>
    <name type="ordered locus">all3879</name>
</gene>
<keyword id="KW-0067">ATP-binding</keyword>
<keyword id="KW-0436">Ligase</keyword>
<keyword id="KW-0547">Nucleotide-binding</keyword>
<keyword id="KW-1185">Reference proteome</keyword>
<proteinExistence type="inferred from homology"/>
<name>CPHA_NOSS1</name>
<organism>
    <name type="scientific">Nostoc sp. (strain PCC 7120 / SAG 25.82 / UTEX 2576)</name>
    <dbReference type="NCBI Taxonomy" id="103690"/>
    <lineage>
        <taxon>Bacteria</taxon>
        <taxon>Bacillati</taxon>
        <taxon>Cyanobacteriota</taxon>
        <taxon>Cyanophyceae</taxon>
        <taxon>Nostocales</taxon>
        <taxon>Nostocaceae</taxon>
        <taxon>Nostoc</taxon>
    </lineage>
</organism>
<evidence type="ECO:0000250" key="1"/>
<evidence type="ECO:0000255" key="2">
    <source>
        <dbReference type="PROSITE-ProRule" id="PRU00409"/>
    </source>
</evidence>
<evidence type="ECO:0000305" key="3"/>
<feature type="chain" id="PRO_0000101711" description="Cyanophycin synthetase">
    <location>
        <begin position="1"/>
        <end position="901"/>
    </location>
</feature>
<feature type="domain" description="ATP-grasp" evidence="2">
    <location>
        <begin position="224"/>
        <end position="478"/>
    </location>
</feature>
<feature type="binding site" evidence="2">
    <location>
        <begin position="493"/>
        <end position="499"/>
    </location>
    <ligand>
        <name>ATP</name>
        <dbReference type="ChEBI" id="CHEBI:30616"/>
    </ligand>
</feature>
<comment type="function">
    <text evidence="1">Catalyzes the ATP-dependent polymerization of arginine and aspartate to multi-L-arginyl-poly-L-aspartic acid (cyanophycin; a water-insoluble reserve polymer).</text>
</comment>
<comment type="catalytic activity">
    <reaction>
        <text>[L-4-(L-arginin-2-N-yl)aspartate](n) + L-aspartate + ATP = [L-4-(L-arginin-2-N-yl)aspartate](n)-L-aspartate + ADP + phosphate + H(+)</text>
        <dbReference type="Rhea" id="RHEA:13277"/>
        <dbReference type="Rhea" id="RHEA-COMP:13728"/>
        <dbReference type="Rhea" id="RHEA-COMP:13733"/>
        <dbReference type="ChEBI" id="CHEBI:15378"/>
        <dbReference type="ChEBI" id="CHEBI:29991"/>
        <dbReference type="ChEBI" id="CHEBI:30616"/>
        <dbReference type="ChEBI" id="CHEBI:43474"/>
        <dbReference type="ChEBI" id="CHEBI:137986"/>
        <dbReference type="ChEBI" id="CHEBI:137990"/>
        <dbReference type="ChEBI" id="CHEBI:456216"/>
        <dbReference type="EC" id="6.3.2.29"/>
    </reaction>
</comment>
<comment type="catalytic activity">
    <reaction>
        <text>[L-4-(L-arginin-2-N-yl)aspartate](n)-L-aspartate + L-arginine + ATP = [L-4-(L-arginin-2-N-yl)aspartate](n+1) + ADP + phosphate + H(+)</text>
        <dbReference type="Rhea" id="RHEA:23888"/>
        <dbReference type="Rhea" id="RHEA-COMP:13732"/>
        <dbReference type="Rhea" id="RHEA-COMP:13733"/>
        <dbReference type="ChEBI" id="CHEBI:15378"/>
        <dbReference type="ChEBI" id="CHEBI:30616"/>
        <dbReference type="ChEBI" id="CHEBI:32682"/>
        <dbReference type="ChEBI" id="CHEBI:43474"/>
        <dbReference type="ChEBI" id="CHEBI:137986"/>
        <dbReference type="ChEBI" id="CHEBI:137990"/>
        <dbReference type="ChEBI" id="CHEBI:456216"/>
        <dbReference type="EC" id="6.3.2.30"/>
    </reaction>
</comment>
<comment type="subunit">
    <text evidence="1">Homodimer.</text>
</comment>
<comment type="similarity">
    <text evidence="3">In the C-terminal section; belongs to the MurCDEF family.</text>
</comment>
<accession>P58572</accession>
<protein>
    <recommendedName>
        <fullName>Cyanophycin synthetase</fullName>
        <ecNumber>6.3.2.29</ecNumber>
        <ecNumber>6.3.2.30</ecNumber>
    </recommendedName>
    <alternativeName>
        <fullName>Cyanophycin synthase</fullName>
    </alternativeName>
</protein>